<evidence type="ECO:0000255" key="1">
    <source>
        <dbReference type="HAMAP-Rule" id="MF_00193"/>
    </source>
</evidence>
<protein>
    <recommendedName>
        <fullName evidence="1">NH(3)-dependent NAD(+) synthetase</fullName>
        <ecNumber evidence="1">6.3.1.5</ecNumber>
    </recommendedName>
</protein>
<dbReference type="EC" id="6.3.1.5" evidence="1"/>
<dbReference type="EMBL" id="CP000266">
    <property type="protein sequence ID" value="ABF03667.1"/>
    <property type="molecule type" value="Genomic_DNA"/>
</dbReference>
<dbReference type="RefSeq" id="WP_000175045.1">
    <property type="nucleotide sequence ID" value="NC_008258.1"/>
</dbReference>
<dbReference type="SMR" id="Q0T4U8"/>
<dbReference type="KEGG" id="sfv:SFV_1480"/>
<dbReference type="HOGENOM" id="CLU_059327_3_0_6"/>
<dbReference type="UniPathway" id="UPA00253">
    <property type="reaction ID" value="UER00333"/>
</dbReference>
<dbReference type="Proteomes" id="UP000000659">
    <property type="component" value="Chromosome"/>
</dbReference>
<dbReference type="GO" id="GO:0005737">
    <property type="term" value="C:cytoplasm"/>
    <property type="evidence" value="ECO:0007669"/>
    <property type="project" value="InterPro"/>
</dbReference>
<dbReference type="GO" id="GO:0005524">
    <property type="term" value="F:ATP binding"/>
    <property type="evidence" value="ECO:0007669"/>
    <property type="project" value="UniProtKB-UniRule"/>
</dbReference>
<dbReference type="GO" id="GO:0004359">
    <property type="term" value="F:glutaminase activity"/>
    <property type="evidence" value="ECO:0007669"/>
    <property type="project" value="InterPro"/>
</dbReference>
<dbReference type="GO" id="GO:0046872">
    <property type="term" value="F:metal ion binding"/>
    <property type="evidence" value="ECO:0007669"/>
    <property type="project" value="UniProtKB-KW"/>
</dbReference>
<dbReference type="GO" id="GO:0003952">
    <property type="term" value="F:NAD+ synthase (glutamine-hydrolyzing) activity"/>
    <property type="evidence" value="ECO:0007669"/>
    <property type="project" value="InterPro"/>
</dbReference>
<dbReference type="GO" id="GO:0008795">
    <property type="term" value="F:NAD+ synthase activity"/>
    <property type="evidence" value="ECO:0007669"/>
    <property type="project" value="UniProtKB-UniRule"/>
</dbReference>
<dbReference type="GO" id="GO:0009435">
    <property type="term" value="P:NAD biosynthetic process"/>
    <property type="evidence" value="ECO:0007669"/>
    <property type="project" value="UniProtKB-UniRule"/>
</dbReference>
<dbReference type="CDD" id="cd00553">
    <property type="entry name" value="NAD_synthase"/>
    <property type="match status" value="1"/>
</dbReference>
<dbReference type="FunFam" id="3.40.50.620:FF:000015">
    <property type="entry name" value="NH(3)-dependent NAD(+) synthetase"/>
    <property type="match status" value="1"/>
</dbReference>
<dbReference type="Gene3D" id="3.40.50.620">
    <property type="entry name" value="HUPs"/>
    <property type="match status" value="1"/>
</dbReference>
<dbReference type="HAMAP" id="MF_00193">
    <property type="entry name" value="NadE_ammonia_dep"/>
    <property type="match status" value="1"/>
</dbReference>
<dbReference type="InterPro" id="IPR022310">
    <property type="entry name" value="NAD/GMP_synthase"/>
</dbReference>
<dbReference type="InterPro" id="IPR003694">
    <property type="entry name" value="NAD_synthase"/>
</dbReference>
<dbReference type="InterPro" id="IPR022926">
    <property type="entry name" value="NH(3)-dep_NAD(+)_synth"/>
</dbReference>
<dbReference type="InterPro" id="IPR014729">
    <property type="entry name" value="Rossmann-like_a/b/a_fold"/>
</dbReference>
<dbReference type="NCBIfam" id="TIGR00552">
    <property type="entry name" value="nadE"/>
    <property type="match status" value="1"/>
</dbReference>
<dbReference type="NCBIfam" id="NF001979">
    <property type="entry name" value="PRK00768.1"/>
    <property type="match status" value="1"/>
</dbReference>
<dbReference type="PANTHER" id="PTHR23090">
    <property type="entry name" value="NH 3 /GLUTAMINE-DEPENDENT NAD + SYNTHETASE"/>
    <property type="match status" value="1"/>
</dbReference>
<dbReference type="PANTHER" id="PTHR23090:SF7">
    <property type="entry name" value="NH(3)-DEPENDENT NAD(+) SYNTHETASE"/>
    <property type="match status" value="1"/>
</dbReference>
<dbReference type="Pfam" id="PF02540">
    <property type="entry name" value="NAD_synthase"/>
    <property type="match status" value="1"/>
</dbReference>
<dbReference type="SUPFAM" id="SSF52402">
    <property type="entry name" value="Adenine nucleotide alpha hydrolases-like"/>
    <property type="match status" value="1"/>
</dbReference>
<sequence>MTLQQQIIKALGAKPQINAEEEIRRSVDFLKSYLQTYPFIKSLVLGISGGQDSTLAGKLCQMAINELRQETRNESLQFIAVRLPYGVQADEQDCQDAIAFIQPDRVLTVNIKGAVLASEQALREAGIELSDFVRGNEKARERMKAQYSIAGMTSGVVVGTDHAAEAITGFFTKYGDGGTDINPLYRLNKRQGKQLLTALGCPEHLYKKAPTADLEDDRPSLPDEVALGVTYDNIDDYLEGKNLPEQVARTIENWYLKTEHKRRPPINVFDDFWKK</sequence>
<reference key="1">
    <citation type="journal article" date="2006" name="BMC Genomics">
        <title>Complete genome sequence of Shigella flexneri 5b and comparison with Shigella flexneri 2a.</title>
        <authorList>
            <person name="Nie H."/>
            <person name="Yang F."/>
            <person name="Zhang X."/>
            <person name="Yang J."/>
            <person name="Chen L."/>
            <person name="Wang J."/>
            <person name="Xiong Z."/>
            <person name="Peng J."/>
            <person name="Sun L."/>
            <person name="Dong J."/>
            <person name="Xue Y."/>
            <person name="Xu X."/>
            <person name="Chen S."/>
            <person name="Yao Z."/>
            <person name="Shen Y."/>
            <person name="Jin Q."/>
        </authorList>
    </citation>
    <scope>NUCLEOTIDE SEQUENCE [LARGE SCALE GENOMIC DNA]</scope>
    <source>
        <strain>8401</strain>
    </source>
</reference>
<name>NADE_SHIF8</name>
<organism>
    <name type="scientific">Shigella flexneri serotype 5b (strain 8401)</name>
    <dbReference type="NCBI Taxonomy" id="373384"/>
    <lineage>
        <taxon>Bacteria</taxon>
        <taxon>Pseudomonadati</taxon>
        <taxon>Pseudomonadota</taxon>
        <taxon>Gammaproteobacteria</taxon>
        <taxon>Enterobacterales</taxon>
        <taxon>Enterobacteriaceae</taxon>
        <taxon>Shigella</taxon>
    </lineage>
</organism>
<keyword id="KW-0067">ATP-binding</keyword>
<keyword id="KW-0436">Ligase</keyword>
<keyword id="KW-0460">Magnesium</keyword>
<keyword id="KW-0479">Metal-binding</keyword>
<keyword id="KW-0520">NAD</keyword>
<keyword id="KW-0547">Nucleotide-binding</keyword>
<feature type="chain" id="PRO_1000077609" description="NH(3)-dependent NAD(+) synthetase">
    <location>
        <begin position="1"/>
        <end position="275"/>
    </location>
</feature>
<feature type="binding site" evidence="1">
    <location>
        <begin position="46"/>
        <end position="53"/>
    </location>
    <ligand>
        <name>ATP</name>
        <dbReference type="ChEBI" id="CHEBI:30616"/>
    </ligand>
</feature>
<feature type="binding site" evidence="1">
    <location>
        <position position="52"/>
    </location>
    <ligand>
        <name>Mg(2+)</name>
        <dbReference type="ChEBI" id="CHEBI:18420"/>
    </ligand>
</feature>
<feature type="binding site" evidence="1">
    <location>
        <position position="140"/>
    </location>
    <ligand>
        <name>deamido-NAD(+)</name>
        <dbReference type="ChEBI" id="CHEBI:58437"/>
    </ligand>
</feature>
<feature type="binding site" evidence="1">
    <location>
        <position position="160"/>
    </location>
    <ligand>
        <name>ATP</name>
        <dbReference type="ChEBI" id="CHEBI:30616"/>
    </ligand>
</feature>
<feature type="binding site" evidence="1">
    <location>
        <position position="165"/>
    </location>
    <ligand>
        <name>Mg(2+)</name>
        <dbReference type="ChEBI" id="CHEBI:18420"/>
    </ligand>
</feature>
<feature type="binding site" evidence="1">
    <location>
        <position position="173"/>
    </location>
    <ligand>
        <name>deamido-NAD(+)</name>
        <dbReference type="ChEBI" id="CHEBI:58437"/>
    </ligand>
</feature>
<feature type="binding site" evidence="1">
    <location>
        <position position="180"/>
    </location>
    <ligand>
        <name>deamido-NAD(+)</name>
        <dbReference type="ChEBI" id="CHEBI:58437"/>
    </ligand>
</feature>
<feature type="binding site" evidence="1">
    <location>
        <position position="189"/>
    </location>
    <ligand>
        <name>ATP</name>
        <dbReference type="ChEBI" id="CHEBI:30616"/>
    </ligand>
</feature>
<feature type="binding site" evidence="1">
    <location>
        <position position="211"/>
    </location>
    <ligand>
        <name>ATP</name>
        <dbReference type="ChEBI" id="CHEBI:30616"/>
    </ligand>
</feature>
<feature type="binding site" evidence="1">
    <location>
        <begin position="260"/>
        <end position="261"/>
    </location>
    <ligand>
        <name>deamido-NAD(+)</name>
        <dbReference type="ChEBI" id="CHEBI:58437"/>
    </ligand>
</feature>
<comment type="function">
    <text evidence="1">Catalyzes the ATP-dependent amidation of deamido-NAD to form NAD. Uses ammonia as a nitrogen source.</text>
</comment>
<comment type="catalytic activity">
    <reaction evidence="1">
        <text>deamido-NAD(+) + NH4(+) + ATP = AMP + diphosphate + NAD(+) + H(+)</text>
        <dbReference type="Rhea" id="RHEA:21188"/>
        <dbReference type="ChEBI" id="CHEBI:15378"/>
        <dbReference type="ChEBI" id="CHEBI:28938"/>
        <dbReference type="ChEBI" id="CHEBI:30616"/>
        <dbReference type="ChEBI" id="CHEBI:33019"/>
        <dbReference type="ChEBI" id="CHEBI:57540"/>
        <dbReference type="ChEBI" id="CHEBI:58437"/>
        <dbReference type="ChEBI" id="CHEBI:456215"/>
        <dbReference type="EC" id="6.3.1.5"/>
    </reaction>
</comment>
<comment type="pathway">
    <text evidence="1">Cofactor biosynthesis; NAD(+) biosynthesis; NAD(+) from deamido-NAD(+) (ammonia route): step 1/1.</text>
</comment>
<comment type="subunit">
    <text evidence="1">Homodimer.</text>
</comment>
<comment type="similarity">
    <text evidence="1">Belongs to the NAD synthetase family.</text>
</comment>
<gene>
    <name evidence="1" type="primary">nadE</name>
    <name type="ordered locus">SFV_1480</name>
</gene>
<accession>Q0T4U8</accession>
<proteinExistence type="inferred from homology"/>